<name>TBA_LEPDS</name>
<protein>
    <recommendedName>
        <fullName>Tubulin alpha chain</fullName>
        <ecNumber evidence="2">3.6.5.-</ecNumber>
    </recommendedName>
    <allergenName>Lep d ?</allergenName>
</protein>
<reference key="1">
    <citation type="journal article" date="2003" name="Int. Arch. Allergy Immunol.">
        <title>Cloning and characterisation of two IgE-binding proteins, homologous to tropomyosin and alpha-tubulin, from the mite Lepidoglyphus destructor.</title>
        <authorList>
            <person name="Saarne T."/>
            <person name="Kaiser L."/>
            <person name="Rasool O."/>
            <person name="Huecas S."/>
            <person name="van Hage-Hamsten M."/>
            <person name="Gafvelin G."/>
        </authorList>
    </citation>
    <scope>NUCLEOTIDE SEQUENCE [MRNA]</scope>
    <scope>ALLERGEN</scope>
</reference>
<evidence type="ECO:0000250" key="1"/>
<evidence type="ECO:0000250" key="2">
    <source>
        <dbReference type="UniProtKB" id="P68363"/>
    </source>
</evidence>
<evidence type="ECO:0000269" key="3">
    <source>
    </source>
</evidence>
<evidence type="ECO:0000305" key="4"/>
<keyword id="KW-0007">Acetylation</keyword>
<keyword id="KW-0020">Allergen</keyword>
<keyword id="KW-0963">Cytoplasm</keyword>
<keyword id="KW-0206">Cytoskeleton</keyword>
<keyword id="KW-0342">GTP-binding</keyword>
<keyword id="KW-0378">Hydrolase</keyword>
<keyword id="KW-0460">Magnesium</keyword>
<keyword id="KW-0479">Metal-binding</keyword>
<keyword id="KW-0493">Microtubule</keyword>
<keyword id="KW-0547">Nucleotide-binding</keyword>
<organism>
    <name type="scientific">Lepidoglyphus destructor</name>
    <name type="common">Storage mite</name>
    <name type="synonym">Glycyphagus destructor</name>
    <dbReference type="NCBI Taxonomy" id="36936"/>
    <lineage>
        <taxon>Eukaryota</taxon>
        <taxon>Metazoa</taxon>
        <taxon>Ecdysozoa</taxon>
        <taxon>Arthropoda</taxon>
        <taxon>Chelicerata</taxon>
        <taxon>Arachnida</taxon>
        <taxon>Acari</taxon>
        <taxon>Acariformes</taxon>
        <taxon>Sarcoptiformes</taxon>
        <taxon>Astigmata</taxon>
        <taxon>Glycyphagoidea</taxon>
        <taxon>Glycyphagidae</taxon>
        <taxon>Lepidoglyphus</taxon>
    </lineage>
</organism>
<feature type="chain" id="PRO_0000048185" description="Tubulin alpha chain">
    <location>
        <begin position="1"/>
        <end position="450"/>
    </location>
</feature>
<feature type="active site" evidence="2">
    <location>
        <position position="254"/>
    </location>
</feature>
<feature type="binding site" evidence="2">
    <location>
        <position position="11"/>
    </location>
    <ligand>
        <name>GTP</name>
        <dbReference type="ChEBI" id="CHEBI:37565"/>
    </ligand>
</feature>
<feature type="binding site" evidence="2">
    <location>
        <position position="71"/>
    </location>
    <ligand>
        <name>GTP</name>
        <dbReference type="ChEBI" id="CHEBI:37565"/>
    </ligand>
</feature>
<feature type="binding site" evidence="2">
    <location>
        <position position="71"/>
    </location>
    <ligand>
        <name>Mg(2+)</name>
        <dbReference type="ChEBI" id="CHEBI:18420"/>
    </ligand>
</feature>
<feature type="binding site" evidence="2">
    <location>
        <position position="140"/>
    </location>
    <ligand>
        <name>GTP</name>
        <dbReference type="ChEBI" id="CHEBI:37565"/>
    </ligand>
</feature>
<feature type="binding site" evidence="2">
    <location>
        <position position="144"/>
    </location>
    <ligand>
        <name>GTP</name>
        <dbReference type="ChEBI" id="CHEBI:37565"/>
    </ligand>
</feature>
<feature type="binding site" evidence="2">
    <location>
        <position position="145"/>
    </location>
    <ligand>
        <name>GTP</name>
        <dbReference type="ChEBI" id="CHEBI:37565"/>
    </ligand>
</feature>
<feature type="binding site" evidence="2">
    <location>
        <position position="179"/>
    </location>
    <ligand>
        <name>GTP</name>
        <dbReference type="ChEBI" id="CHEBI:37565"/>
    </ligand>
</feature>
<feature type="binding site" evidence="2">
    <location>
        <position position="206"/>
    </location>
    <ligand>
        <name>GTP</name>
        <dbReference type="ChEBI" id="CHEBI:37565"/>
    </ligand>
</feature>
<feature type="binding site" evidence="2">
    <location>
        <position position="228"/>
    </location>
    <ligand>
        <name>GTP</name>
        <dbReference type="ChEBI" id="CHEBI:37565"/>
    </ligand>
</feature>
<feature type="modified residue" description="N6-acetyllysine" evidence="1">
    <location>
        <position position="40"/>
    </location>
</feature>
<comment type="function">
    <text>Tubulin is the major constituent of microtubules, a cylinder consisting of laterally associated linear protofilaments composed of alpha- and beta-tubulin heterodimers. Microtubules grow by the addition of GTP-tubulin dimers to the microtubule end, where a stabilizing cap forms. Below the cap, tubulin dimers are in GDP-bound state, owing to GTPase activity of alpha-tubulin.</text>
</comment>
<comment type="catalytic activity">
    <reaction evidence="2">
        <text>GTP + H2O = GDP + phosphate + H(+)</text>
        <dbReference type="Rhea" id="RHEA:19669"/>
        <dbReference type="ChEBI" id="CHEBI:15377"/>
        <dbReference type="ChEBI" id="CHEBI:15378"/>
        <dbReference type="ChEBI" id="CHEBI:37565"/>
        <dbReference type="ChEBI" id="CHEBI:43474"/>
        <dbReference type="ChEBI" id="CHEBI:58189"/>
    </reaction>
    <physiologicalReaction direction="left-to-right" evidence="2">
        <dbReference type="Rhea" id="RHEA:19670"/>
    </physiologicalReaction>
</comment>
<comment type="cofactor">
    <cofactor evidence="2">
        <name>Mg(2+)</name>
        <dbReference type="ChEBI" id="CHEBI:18420"/>
    </cofactor>
</comment>
<comment type="subunit">
    <text>Dimer of alpha and beta chains. A typical microtubule is a hollow water-filled tube with an outer diameter of 25 nm and an inner diameter of 15 nM. Alpha-beta heterodimers associate head-to-tail to form protofilaments running lengthwise along the microtubule wall with the beta-tubulin subunit facing the microtubule plus end conferring a structural polarity. Microtubules usually have 13 protofilaments but different protofilament numbers can be found in some organisms and specialized cells.</text>
</comment>
<comment type="subcellular location">
    <subcellularLocation>
        <location>Cytoplasm</location>
        <location>Cytoskeleton</location>
    </subcellularLocation>
</comment>
<comment type="PTM">
    <text evidence="1">Undergoes a tyrosination/detyrosination cycle, the cyclic removal and re-addition of a C-terminal tyrosine residue by the enzymes tubulin tyrosine carboxypeptidase (TTCP) and tubulin tyrosine ligase (TTL), respectively.</text>
</comment>
<comment type="PTM">
    <text evidence="1">Acetylation of alpha chains at Lys-40 stabilizes microtubules and affects affinity and processivity of microtubule motors. This modification has a role in multiple cellular functions, ranging from cell motility, cell cycle progression or cell differentiation to intracellular trafficking and signaling (By similarity).</text>
</comment>
<comment type="allergen">
    <text evidence="3">Causes an allergic reaction in human. Common symptoms of mite allergy are bronchial asthma, allergic rhinitis and conjunctivitis.</text>
</comment>
<comment type="similarity">
    <text evidence="4">Belongs to the tubulin family.</text>
</comment>
<comment type="caution">
    <text evidence="4">This protein lacks the required Tyr in position 450; it is replaced by a Phe.</text>
</comment>
<accession>Q8WQ47</accession>
<dbReference type="EC" id="3.6.5.-" evidence="2"/>
<dbReference type="EMBL" id="AJ428050">
    <property type="protein sequence ID" value="CAD20979.2"/>
    <property type="molecule type" value="mRNA"/>
</dbReference>
<dbReference type="SMR" id="Q8WQ47"/>
<dbReference type="Allergome" id="1075">
    <property type="allergen name" value="Lep d 33"/>
</dbReference>
<dbReference type="GO" id="GO:0005737">
    <property type="term" value="C:cytoplasm"/>
    <property type="evidence" value="ECO:0007669"/>
    <property type="project" value="UniProtKB-KW"/>
</dbReference>
<dbReference type="GO" id="GO:0005874">
    <property type="term" value="C:microtubule"/>
    <property type="evidence" value="ECO:0007669"/>
    <property type="project" value="UniProtKB-KW"/>
</dbReference>
<dbReference type="GO" id="GO:0005525">
    <property type="term" value="F:GTP binding"/>
    <property type="evidence" value="ECO:0007669"/>
    <property type="project" value="UniProtKB-KW"/>
</dbReference>
<dbReference type="GO" id="GO:0016787">
    <property type="term" value="F:hydrolase activity"/>
    <property type="evidence" value="ECO:0007669"/>
    <property type="project" value="UniProtKB-KW"/>
</dbReference>
<dbReference type="GO" id="GO:0046872">
    <property type="term" value="F:metal ion binding"/>
    <property type="evidence" value="ECO:0007669"/>
    <property type="project" value="UniProtKB-KW"/>
</dbReference>
<dbReference type="GO" id="GO:0005200">
    <property type="term" value="F:structural constituent of cytoskeleton"/>
    <property type="evidence" value="ECO:0007669"/>
    <property type="project" value="InterPro"/>
</dbReference>
<dbReference type="GO" id="GO:0007017">
    <property type="term" value="P:microtubule-based process"/>
    <property type="evidence" value="ECO:0007669"/>
    <property type="project" value="InterPro"/>
</dbReference>
<dbReference type="CDD" id="cd02186">
    <property type="entry name" value="alpha_tubulin"/>
    <property type="match status" value="1"/>
</dbReference>
<dbReference type="FunFam" id="1.10.287.600:FF:000005">
    <property type="entry name" value="Tubulin alpha chain"/>
    <property type="match status" value="1"/>
</dbReference>
<dbReference type="FunFam" id="3.30.1330.20:FF:000001">
    <property type="entry name" value="Tubulin alpha chain"/>
    <property type="match status" value="1"/>
</dbReference>
<dbReference type="FunFam" id="3.40.50.1440:FF:000002">
    <property type="entry name" value="Tubulin alpha chain"/>
    <property type="match status" value="1"/>
</dbReference>
<dbReference type="Gene3D" id="1.10.287.600">
    <property type="entry name" value="Helix hairpin bin"/>
    <property type="match status" value="1"/>
</dbReference>
<dbReference type="Gene3D" id="3.30.1330.20">
    <property type="entry name" value="Tubulin/FtsZ, C-terminal domain"/>
    <property type="match status" value="1"/>
</dbReference>
<dbReference type="Gene3D" id="3.40.50.1440">
    <property type="entry name" value="Tubulin/FtsZ, GTPase domain"/>
    <property type="match status" value="1"/>
</dbReference>
<dbReference type="InterPro" id="IPR002452">
    <property type="entry name" value="Alpha_tubulin"/>
</dbReference>
<dbReference type="InterPro" id="IPR008280">
    <property type="entry name" value="Tub_FtsZ_C"/>
</dbReference>
<dbReference type="InterPro" id="IPR000217">
    <property type="entry name" value="Tubulin"/>
</dbReference>
<dbReference type="InterPro" id="IPR037103">
    <property type="entry name" value="Tubulin/FtsZ-like_C"/>
</dbReference>
<dbReference type="InterPro" id="IPR018316">
    <property type="entry name" value="Tubulin/FtsZ_2-layer-sand-dom"/>
</dbReference>
<dbReference type="InterPro" id="IPR036525">
    <property type="entry name" value="Tubulin/FtsZ_GTPase_sf"/>
</dbReference>
<dbReference type="InterPro" id="IPR023123">
    <property type="entry name" value="Tubulin_C"/>
</dbReference>
<dbReference type="InterPro" id="IPR017975">
    <property type="entry name" value="Tubulin_CS"/>
</dbReference>
<dbReference type="InterPro" id="IPR003008">
    <property type="entry name" value="Tubulin_FtsZ_GTPase"/>
</dbReference>
<dbReference type="PANTHER" id="PTHR11588">
    <property type="entry name" value="TUBULIN"/>
    <property type="match status" value="1"/>
</dbReference>
<dbReference type="Pfam" id="PF00091">
    <property type="entry name" value="Tubulin"/>
    <property type="match status" value="1"/>
</dbReference>
<dbReference type="Pfam" id="PF03953">
    <property type="entry name" value="Tubulin_C"/>
    <property type="match status" value="1"/>
</dbReference>
<dbReference type="PRINTS" id="PR01162">
    <property type="entry name" value="ALPHATUBULIN"/>
</dbReference>
<dbReference type="PRINTS" id="PR01161">
    <property type="entry name" value="TUBULIN"/>
</dbReference>
<dbReference type="SMART" id="SM00864">
    <property type="entry name" value="Tubulin"/>
    <property type="match status" value="1"/>
</dbReference>
<dbReference type="SMART" id="SM00865">
    <property type="entry name" value="Tubulin_C"/>
    <property type="match status" value="1"/>
</dbReference>
<dbReference type="SUPFAM" id="SSF55307">
    <property type="entry name" value="Tubulin C-terminal domain-like"/>
    <property type="match status" value="1"/>
</dbReference>
<dbReference type="SUPFAM" id="SSF52490">
    <property type="entry name" value="Tubulin nucleotide-binding domain-like"/>
    <property type="match status" value="1"/>
</dbReference>
<dbReference type="PROSITE" id="PS00227">
    <property type="entry name" value="TUBULIN"/>
    <property type="match status" value="1"/>
</dbReference>
<sequence length="450" mass="50038">MRECISVHVGQAGVQIGNACWELYCLEHGIQPDGQMPSDKTIGTGDDSFNTFFSETGSGKHVPRAVYVDLEPTVVDEVRTGTYRQLFHPEQLITGKEDAANNYARGHYTIGKEIVDLVLDRIRKLADQCTGLQGFLIFHSFGGGTGSGFTSLLMERLSVDYGKKSKLEFAVYPAPQVSTAVVEPYNSILTTHTTLEHSDCAFMVDNEAIYDICRRNLDIERPTYTNLNRLIGQIVSSITASLRFDGALNVDLTEFQTNLVPYPRIHFPLVTYAPVISSEKAYHEQLTVSEITNTCFEPANQMVKCDPRHGKYMACCLLYRGDVVPKDVNAAIAAIKTKRSIQFVDWCPTGFKVGINYQPPTVVPGGDLAKVQRAVCMLSNTTAIAEAWARLDHKFDLMYAKRAFVHWYVGEGMEEGEFSEAREDLAALEKDYEEVGLDSTEADDTAGEEF</sequence>
<proteinExistence type="evidence at protein level"/>